<evidence type="ECO:0000255" key="1">
    <source>
        <dbReference type="HAMAP-Rule" id="MF_00482"/>
    </source>
</evidence>
<feature type="chain" id="PRO_0000300042" description="Photosystem I P700 chlorophyll a apoprotein A2">
    <location>
        <begin position="1"/>
        <end position="734"/>
    </location>
</feature>
<feature type="transmembrane region" description="Helical; Name=I" evidence="1">
    <location>
        <begin position="46"/>
        <end position="69"/>
    </location>
</feature>
<feature type="transmembrane region" description="Helical; Name=II" evidence="1">
    <location>
        <begin position="135"/>
        <end position="158"/>
    </location>
</feature>
<feature type="transmembrane region" description="Helical; Name=III" evidence="1">
    <location>
        <begin position="175"/>
        <end position="199"/>
    </location>
</feature>
<feature type="transmembrane region" description="Helical; Name=IV" evidence="1">
    <location>
        <begin position="273"/>
        <end position="291"/>
    </location>
</feature>
<feature type="transmembrane region" description="Helical; Name=V" evidence="1">
    <location>
        <begin position="330"/>
        <end position="353"/>
    </location>
</feature>
<feature type="transmembrane region" description="Helical; Name=VI" evidence="1">
    <location>
        <begin position="369"/>
        <end position="395"/>
    </location>
</feature>
<feature type="transmembrane region" description="Helical; Name=VII" evidence="1">
    <location>
        <begin position="417"/>
        <end position="439"/>
    </location>
</feature>
<feature type="transmembrane region" description="Helical; Name=VIII" evidence="1">
    <location>
        <begin position="517"/>
        <end position="535"/>
    </location>
</feature>
<feature type="transmembrane region" description="Helical; Name=IX" evidence="1">
    <location>
        <begin position="575"/>
        <end position="596"/>
    </location>
</feature>
<feature type="transmembrane region" description="Helical; Name=X" evidence="1">
    <location>
        <begin position="643"/>
        <end position="665"/>
    </location>
</feature>
<feature type="transmembrane region" description="Helical; Name=XI" evidence="1">
    <location>
        <begin position="707"/>
        <end position="727"/>
    </location>
</feature>
<feature type="binding site" evidence="1">
    <location>
        <position position="559"/>
    </location>
    <ligand>
        <name>[4Fe-4S] cluster</name>
        <dbReference type="ChEBI" id="CHEBI:49883"/>
        <note>ligand shared between dimeric partners</note>
    </ligand>
</feature>
<feature type="binding site" evidence="1">
    <location>
        <position position="568"/>
    </location>
    <ligand>
        <name>[4Fe-4S] cluster</name>
        <dbReference type="ChEBI" id="CHEBI:49883"/>
        <note>ligand shared between dimeric partners</note>
    </ligand>
</feature>
<feature type="binding site" description="axial binding residue" evidence="1">
    <location>
        <position position="654"/>
    </location>
    <ligand>
        <name>chlorophyll a</name>
        <dbReference type="ChEBI" id="CHEBI:58416"/>
        <label>B1</label>
    </ligand>
    <ligandPart>
        <name>Mg</name>
        <dbReference type="ChEBI" id="CHEBI:25107"/>
    </ligandPart>
</feature>
<feature type="binding site" description="axial binding residue" evidence="1">
    <location>
        <position position="662"/>
    </location>
    <ligand>
        <name>chlorophyll a</name>
        <dbReference type="ChEBI" id="CHEBI:58416"/>
        <label>B3</label>
    </ligand>
    <ligandPart>
        <name>Mg</name>
        <dbReference type="ChEBI" id="CHEBI:25107"/>
    </ligandPart>
</feature>
<feature type="binding site" evidence="1">
    <location>
        <position position="670"/>
    </location>
    <ligand>
        <name>chlorophyll a</name>
        <dbReference type="ChEBI" id="CHEBI:58416"/>
        <label>B3</label>
    </ligand>
</feature>
<feature type="binding site" evidence="1">
    <location>
        <position position="671"/>
    </location>
    <ligand>
        <name>phylloquinone</name>
        <dbReference type="ChEBI" id="CHEBI:18067"/>
        <label>B</label>
    </ligand>
</feature>
<organism>
    <name type="scientific">Cycas taitungensis</name>
    <name type="common">Prince sago</name>
    <name type="synonym">Cycas taiwaniana</name>
    <dbReference type="NCBI Taxonomy" id="54799"/>
    <lineage>
        <taxon>Eukaryota</taxon>
        <taxon>Viridiplantae</taxon>
        <taxon>Streptophyta</taxon>
        <taxon>Embryophyta</taxon>
        <taxon>Tracheophyta</taxon>
        <taxon>Spermatophyta</taxon>
        <taxon>Cycadidae</taxon>
        <taxon>Cycadales</taxon>
        <taxon>Cycadaceae</taxon>
        <taxon>Cycas</taxon>
    </lineage>
</organism>
<accession>A6H5H1</accession>
<gene>
    <name evidence="1" type="primary">psaB</name>
</gene>
<comment type="function">
    <text evidence="1">PsaA and PsaB bind P700, the primary electron donor of photosystem I (PSI), as well as the electron acceptors A0, A1 and FX. PSI is a plastocyanin-ferredoxin oxidoreductase, converting photonic excitation into a charge separation, which transfers an electron from the donor P700 chlorophyll pair to the spectroscopically characterized acceptors A0, A1, FX, FA and FB in turn. Oxidized P700 is reduced on the lumenal side of the thylakoid membrane by plastocyanin.</text>
</comment>
<comment type="catalytic activity">
    <reaction evidence="1">
        <text>reduced [plastocyanin] + hnu + oxidized [2Fe-2S]-[ferredoxin] = oxidized [plastocyanin] + reduced [2Fe-2S]-[ferredoxin]</text>
        <dbReference type="Rhea" id="RHEA:30407"/>
        <dbReference type="Rhea" id="RHEA-COMP:10000"/>
        <dbReference type="Rhea" id="RHEA-COMP:10001"/>
        <dbReference type="Rhea" id="RHEA-COMP:10039"/>
        <dbReference type="Rhea" id="RHEA-COMP:10040"/>
        <dbReference type="ChEBI" id="CHEBI:29036"/>
        <dbReference type="ChEBI" id="CHEBI:30212"/>
        <dbReference type="ChEBI" id="CHEBI:33737"/>
        <dbReference type="ChEBI" id="CHEBI:33738"/>
        <dbReference type="ChEBI" id="CHEBI:49552"/>
        <dbReference type="EC" id="1.97.1.12"/>
    </reaction>
</comment>
<comment type="cofactor">
    <text evidence="1">P700 is a chlorophyll a/chlorophyll a' dimer, A0 is one or more chlorophyll a, A1 is one or both phylloquinones and FX is a shared 4Fe-4S iron-sulfur center.</text>
</comment>
<comment type="subunit">
    <text evidence="1">The PsaA/B heterodimer binds the P700 chlorophyll special pair and subsequent electron acceptors. PSI consists of a core antenna complex that captures photons, and an electron transfer chain that converts photonic excitation into a charge separation. The eukaryotic PSI reaction center is composed of at least 11 subunits.</text>
</comment>
<comment type="subcellular location">
    <subcellularLocation>
        <location evidence="1">Plastid</location>
        <location evidence="1">Chloroplast thylakoid membrane</location>
        <topology evidence="1">Multi-pass membrane protein</topology>
    </subcellularLocation>
</comment>
<comment type="similarity">
    <text evidence="1">Belongs to the PsaA/PsaB family.</text>
</comment>
<sequence length="734" mass="82445">MASRFPKFSQGLAQDPTTRRIWFGIATAHDFESHDDITEERLYQKIFASHFGQLAIIFLWTSGNLFHVAWQGNFEAWVRDPLHVRPIAHAIWDLHFGQPAVEAFTRGGAPGPVNIAHSGVYQWWYTIGLRTNEDLYTGALFLLFLSAISLIAGRFHLQPKWKPSVSWFKNAESRLDHHLSGLFGVSSLAWTGHLVHVAIPESRGEHVRWDNFLDVLPYPRGLGPLFTGQWNLYAQNPDSSSHLFGTSQGAGTAILTLLGGFHPQTQSLWLTDIAHHHLAIAFVFFIAGHMYRTNFGIGHSIKDILEAHIPPGGLLGRGHKGLYNTINNSLHFQLGLALASLGVITSLVAQHMYSLPAYAFIAQDFTTQAALYTHHQYIAGFIMTGAFAHGAIFFIRDYNPEQNRDNVLARMLEHKEAIISHLSWASLFLGFHTLGLYVHNDVMLAFGTPEKQILIEPIFAQWIQSAHGKALYGFDVLLSSTNSPAFNAGQSIWLPGWLNAINDNSNSLFLTIGPGDFLVHHAIALGLHTTTLILVKGALDARGSKLMPDKKDFGYSFPCDGPGRGGTCDISAWDAFYLAVFWMLNTIGWVTFYWHWKHITLWQGNVAQFNESSTYLMGWLRDYLWLNSSQLINGYNPFGMNSLSVWAWMFLFGHLVWATGFMFLISWRGYWQELIETLAWAHERTPLANSVRWRDKPVALSIVQARLVGLAHFSVGYIFTYAAFLIASTSGKFG</sequence>
<reference key="1">
    <citation type="journal article" date="2007" name="Mol. Biol. Evol.">
        <title>Chloroplast genome (cpDNA) of Cycas taitungensis and 56 cp protein-coding genes of Gnetum parvifolium: insights into cpDNA evolution and phylogeny of extant seed plants.</title>
        <authorList>
            <person name="Wu C.-S."/>
            <person name="Wang Y.-N."/>
            <person name="Liu S.-M."/>
            <person name="Chaw S.-M."/>
        </authorList>
    </citation>
    <scope>NUCLEOTIDE SEQUENCE [LARGE SCALE GENOMIC DNA]</scope>
</reference>
<protein>
    <recommendedName>
        <fullName evidence="1">Photosystem I P700 chlorophyll a apoprotein A2</fullName>
        <ecNumber evidence="1">1.97.1.12</ecNumber>
    </recommendedName>
    <alternativeName>
        <fullName evidence="1">PSI-B</fullName>
    </alternativeName>
    <alternativeName>
        <fullName evidence="1">PsaB</fullName>
    </alternativeName>
</protein>
<keyword id="KW-0004">4Fe-4S</keyword>
<keyword id="KW-0148">Chlorophyll</keyword>
<keyword id="KW-0150">Chloroplast</keyword>
<keyword id="KW-0157">Chromophore</keyword>
<keyword id="KW-0249">Electron transport</keyword>
<keyword id="KW-0408">Iron</keyword>
<keyword id="KW-0411">Iron-sulfur</keyword>
<keyword id="KW-0460">Magnesium</keyword>
<keyword id="KW-0472">Membrane</keyword>
<keyword id="KW-0479">Metal-binding</keyword>
<keyword id="KW-0560">Oxidoreductase</keyword>
<keyword id="KW-0602">Photosynthesis</keyword>
<keyword id="KW-0603">Photosystem I</keyword>
<keyword id="KW-0934">Plastid</keyword>
<keyword id="KW-0793">Thylakoid</keyword>
<keyword id="KW-0812">Transmembrane</keyword>
<keyword id="KW-1133">Transmembrane helix</keyword>
<keyword id="KW-0813">Transport</keyword>
<dbReference type="EC" id="1.97.1.12" evidence="1"/>
<dbReference type="EMBL" id="AP009339">
    <property type="protein sequence ID" value="BAF64937.1"/>
    <property type="molecule type" value="Genomic_DNA"/>
</dbReference>
<dbReference type="RefSeq" id="YP_001312196.1">
    <property type="nucleotide sequence ID" value="NC_009618.1"/>
</dbReference>
<dbReference type="SMR" id="A6H5H1"/>
<dbReference type="GeneID" id="5309525"/>
<dbReference type="GO" id="GO:0009535">
    <property type="term" value="C:chloroplast thylakoid membrane"/>
    <property type="evidence" value="ECO:0007669"/>
    <property type="project" value="UniProtKB-SubCell"/>
</dbReference>
<dbReference type="GO" id="GO:0009522">
    <property type="term" value="C:photosystem I"/>
    <property type="evidence" value="ECO:0007669"/>
    <property type="project" value="UniProtKB-KW"/>
</dbReference>
<dbReference type="GO" id="GO:0051539">
    <property type="term" value="F:4 iron, 4 sulfur cluster binding"/>
    <property type="evidence" value="ECO:0007669"/>
    <property type="project" value="UniProtKB-KW"/>
</dbReference>
<dbReference type="GO" id="GO:0016168">
    <property type="term" value="F:chlorophyll binding"/>
    <property type="evidence" value="ECO:0007669"/>
    <property type="project" value="UniProtKB-KW"/>
</dbReference>
<dbReference type="GO" id="GO:0009055">
    <property type="term" value="F:electron transfer activity"/>
    <property type="evidence" value="ECO:0007669"/>
    <property type="project" value="UniProtKB-UniRule"/>
</dbReference>
<dbReference type="GO" id="GO:0000287">
    <property type="term" value="F:magnesium ion binding"/>
    <property type="evidence" value="ECO:0007669"/>
    <property type="project" value="UniProtKB-UniRule"/>
</dbReference>
<dbReference type="GO" id="GO:0016491">
    <property type="term" value="F:oxidoreductase activity"/>
    <property type="evidence" value="ECO:0007669"/>
    <property type="project" value="UniProtKB-KW"/>
</dbReference>
<dbReference type="GO" id="GO:0015979">
    <property type="term" value="P:photosynthesis"/>
    <property type="evidence" value="ECO:0007669"/>
    <property type="project" value="UniProtKB-UniRule"/>
</dbReference>
<dbReference type="FunFam" id="1.20.1130.10:FF:000001">
    <property type="entry name" value="Photosystem I P700 chlorophyll a apoprotein A2"/>
    <property type="match status" value="1"/>
</dbReference>
<dbReference type="Gene3D" id="1.20.1130.10">
    <property type="entry name" value="Photosystem I PsaA/PsaB"/>
    <property type="match status" value="1"/>
</dbReference>
<dbReference type="HAMAP" id="MF_00482">
    <property type="entry name" value="PSI_PsaB"/>
    <property type="match status" value="1"/>
</dbReference>
<dbReference type="InterPro" id="IPR001280">
    <property type="entry name" value="PSI_PsaA/B"/>
</dbReference>
<dbReference type="InterPro" id="IPR020586">
    <property type="entry name" value="PSI_PsaA/B_CS"/>
</dbReference>
<dbReference type="InterPro" id="IPR036408">
    <property type="entry name" value="PSI_PsaA/B_sf"/>
</dbReference>
<dbReference type="InterPro" id="IPR006244">
    <property type="entry name" value="PSI_PsaB"/>
</dbReference>
<dbReference type="NCBIfam" id="TIGR01336">
    <property type="entry name" value="psaB"/>
    <property type="match status" value="1"/>
</dbReference>
<dbReference type="PANTHER" id="PTHR30128">
    <property type="entry name" value="OUTER MEMBRANE PROTEIN, OMPA-RELATED"/>
    <property type="match status" value="1"/>
</dbReference>
<dbReference type="PANTHER" id="PTHR30128:SF19">
    <property type="entry name" value="PHOTOSYSTEM I P700 CHLOROPHYLL A APOPROTEIN A1-RELATED"/>
    <property type="match status" value="1"/>
</dbReference>
<dbReference type="Pfam" id="PF00223">
    <property type="entry name" value="PsaA_PsaB"/>
    <property type="match status" value="1"/>
</dbReference>
<dbReference type="PIRSF" id="PIRSF002905">
    <property type="entry name" value="PSI_A"/>
    <property type="match status" value="1"/>
</dbReference>
<dbReference type="PRINTS" id="PR00257">
    <property type="entry name" value="PHOTSYSPSAAB"/>
</dbReference>
<dbReference type="SUPFAM" id="SSF81558">
    <property type="entry name" value="Photosystem I subunits PsaA/PsaB"/>
    <property type="match status" value="1"/>
</dbReference>
<dbReference type="PROSITE" id="PS00419">
    <property type="entry name" value="PHOTOSYSTEM_I_PSAAB"/>
    <property type="match status" value="1"/>
</dbReference>
<proteinExistence type="inferred from homology"/>
<name>PSAB_CYCTA</name>
<geneLocation type="chloroplast"/>